<protein>
    <recommendedName>
        <fullName evidence="5">RNA 3'-terminal phosphate cyclase</fullName>
        <shortName evidence="5">RNA cyclase</shortName>
        <shortName evidence="5">RNA-3'-phosphate cyclase</shortName>
        <ecNumber evidence="1">6.5.1.4</ecNumber>
    </recommendedName>
</protein>
<dbReference type="EC" id="6.5.1.4" evidence="1"/>
<dbReference type="EMBL" id="AE014298">
    <property type="protein sequence ID" value="AAF45719.1"/>
    <property type="molecule type" value="Genomic_DNA"/>
</dbReference>
<dbReference type="EMBL" id="AL031765">
    <property type="protein sequence ID" value="CAA21129.1"/>
    <property type="molecule type" value="Genomic_DNA"/>
</dbReference>
<dbReference type="EMBL" id="AY052112">
    <property type="protein sequence ID" value="AAK93536.1"/>
    <property type="molecule type" value="mRNA"/>
</dbReference>
<dbReference type="PIR" id="T13745">
    <property type="entry name" value="T13745"/>
</dbReference>
<dbReference type="RefSeq" id="NP_001284801.1">
    <property type="nucleotide sequence ID" value="NM_001297872.1"/>
</dbReference>
<dbReference type="RefSeq" id="NP_569977.1">
    <property type="nucleotide sequence ID" value="NM_130621.3"/>
</dbReference>
<dbReference type="SMR" id="O77264"/>
<dbReference type="BioGRID" id="57719">
    <property type="interactions" value="7"/>
</dbReference>
<dbReference type="DIP" id="DIP-23093N"/>
<dbReference type="FunCoup" id="O77264">
    <property type="interactions" value="1680"/>
</dbReference>
<dbReference type="STRING" id="7227.FBpp0070316"/>
<dbReference type="PaxDb" id="7227-FBpp0070316"/>
<dbReference type="DNASU" id="31175"/>
<dbReference type="EnsemblMetazoa" id="FBtr0070330">
    <property type="protein sequence ID" value="FBpp0070316"/>
    <property type="gene ID" value="FBgn0025630"/>
</dbReference>
<dbReference type="EnsemblMetazoa" id="FBtr0344156">
    <property type="protein sequence ID" value="FBpp0310569"/>
    <property type="gene ID" value="FBgn0025630"/>
</dbReference>
<dbReference type="GeneID" id="31175"/>
<dbReference type="KEGG" id="dme:Dmel_CG4061"/>
<dbReference type="UCSC" id="CG4061-RA">
    <property type="organism name" value="d. melanogaster"/>
</dbReference>
<dbReference type="AGR" id="FB:FBgn0025630"/>
<dbReference type="CTD" id="8634"/>
<dbReference type="FlyBase" id="FBgn0025630">
    <property type="gene designation" value="Rtca"/>
</dbReference>
<dbReference type="VEuPathDB" id="VectorBase:FBgn0025630"/>
<dbReference type="eggNOG" id="KOG3980">
    <property type="taxonomic scope" value="Eukaryota"/>
</dbReference>
<dbReference type="HOGENOM" id="CLU_027882_0_1_1"/>
<dbReference type="InParanoid" id="O77264"/>
<dbReference type="OMA" id="WSPPIDY"/>
<dbReference type="OrthoDB" id="25029at2759"/>
<dbReference type="PhylomeDB" id="O77264"/>
<dbReference type="BioGRID-ORCS" id="31175">
    <property type="hits" value="0 hits in 1 CRISPR screen"/>
</dbReference>
<dbReference type="GenomeRNAi" id="31175"/>
<dbReference type="PRO" id="PR:O77264"/>
<dbReference type="Proteomes" id="UP000000803">
    <property type="component" value="Chromosome X"/>
</dbReference>
<dbReference type="Bgee" id="FBgn0025630">
    <property type="expression patterns" value="Expressed in intestinal stem cell (Drosophila) in digestive tract and 94 other cell types or tissues"/>
</dbReference>
<dbReference type="ExpressionAtlas" id="O77264">
    <property type="expression patterns" value="baseline and differential"/>
</dbReference>
<dbReference type="GO" id="GO:0005654">
    <property type="term" value="C:nucleoplasm"/>
    <property type="evidence" value="ECO:0007669"/>
    <property type="project" value="UniProtKB-SubCell"/>
</dbReference>
<dbReference type="GO" id="GO:0005634">
    <property type="term" value="C:nucleus"/>
    <property type="evidence" value="ECO:0000314"/>
    <property type="project" value="FlyBase"/>
</dbReference>
<dbReference type="GO" id="GO:0005524">
    <property type="term" value="F:ATP binding"/>
    <property type="evidence" value="ECO:0007669"/>
    <property type="project" value="UniProtKB-KW"/>
</dbReference>
<dbReference type="GO" id="GO:0003963">
    <property type="term" value="F:RNA-3'-phosphate cyclase activity"/>
    <property type="evidence" value="ECO:0000318"/>
    <property type="project" value="GO_Central"/>
</dbReference>
<dbReference type="GO" id="GO:0048681">
    <property type="term" value="P:negative regulation of axon regeneration"/>
    <property type="evidence" value="ECO:0000315"/>
    <property type="project" value="UniProtKB"/>
</dbReference>
<dbReference type="GO" id="GO:0006396">
    <property type="term" value="P:RNA processing"/>
    <property type="evidence" value="ECO:0007669"/>
    <property type="project" value="InterPro"/>
</dbReference>
<dbReference type="CDD" id="cd00874">
    <property type="entry name" value="RNA_Cyclase_Class_II"/>
    <property type="match status" value="1"/>
</dbReference>
<dbReference type="Gene3D" id="3.65.10.20">
    <property type="entry name" value="RNA 3'-terminal phosphate cyclase domain"/>
    <property type="match status" value="1"/>
</dbReference>
<dbReference type="Gene3D" id="3.30.360.20">
    <property type="entry name" value="RNA 3'-terminal phosphate cyclase, insert domain"/>
    <property type="match status" value="1"/>
</dbReference>
<dbReference type="HAMAP" id="MF_00200">
    <property type="entry name" value="RTC"/>
    <property type="match status" value="1"/>
</dbReference>
<dbReference type="InterPro" id="IPR013791">
    <property type="entry name" value="RNA3'-term_phos_cycl_insert"/>
</dbReference>
<dbReference type="InterPro" id="IPR023797">
    <property type="entry name" value="RNA3'_phos_cyclase_dom"/>
</dbReference>
<dbReference type="InterPro" id="IPR037136">
    <property type="entry name" value="RNA3'_phos_cyclase_dom_sf"/>
</dbReference>
<dbReference type="InterPro" id="IPR000228">
    <property type="entry name" value="RNA3'_term_phos_cyc"/>
</dbReference>
<dbReference type="InterPro" id="IPR017770">
    <property type="entry name" value="RNA3'_term_phos_cyc_type_1"/>
</dbReference>
<dbReference type="InterPro" id="IPR013792">
    <property type="entry name" value="RNA3'P_cycl/enolpyr_Trfase_a/b"/>
</dbReference>
<dbReference type="InterPro" id="IPR036553">
    <property type="entry name" value="RPTC_insert"/>
</dbReference>
<dbReference type="NCBIfam" id="TIGR03399">
    <property type="entry name" value="RNA_3prim_cycl"/>
    <property type="match status" value="1"/>
</dbReference>
<dbReference type="PANTHER" id="PTHR11096">
    <property type="entry name" value="RNA 3' TERMINAL PHOSPHATE CYCLASE"/>
    <property type="match status" value="1"/>
</dbReference>
<dbReference type="PANTHER" id="PTHR11096:SF0">
    <property type="entry name" value="RNA 3'-TERMINAL PHOSPHATE CYCLASE"/>
    <property type="match status" value="1"/>
</dbReference>
<dbReference type="Pfam" id="PF01137">
    <property type="entry name" value="RTC"/>
    <property type="match status" value="1"/>
</dbReference>
<dbReference type="Pfam" id="PF05189">
    <property type="entry name" value="RTC_insert"/>
    <property type="match status" value="1"/>
</dbReference>
<dbReference type="PIRSF" id="PIRSF005378">
    <property type="entry name" value="RNA3'_term_phos_cycl_euk"/>
    <property type="match status" value="1"/>
</dbReference>
<dbReference type="SUPFAM" id="SSF55205">
    <property type="entry name" value="EPT/RTPC-like"/>
    <property type="match status" value="2"/>
</dbReference>
<dbReference type="SUPFAM" id="SSF52913">
    <property type="entry name" value="RNA 3'-terminal phosphate cyclase, RPTC, insert domain"/>
    <property type="match status" value="1"/>
</dbReference>
<feature type="chain" id="PRO_0000156412" description="RNA 3'-terminal phosphate cyclase">
    <location>
        <begin position="1"/>
        <end position="361"/>
    </location>
</feature>
<feature type="active site" description="Tele-AMP-histidine intermediate" evidence="2">
    <location>
        <position position="321"/>
    </location>
</feature>
<feature type="binding site" evidence="2">
    <location>
        <position position="105"/>
    </location>
    <ligand>
        <name>ATP</name>
        <dbReference type="ChEBI" id="CHEBI:30616"/>
    </ligand>
</feature>
<feature type="binding site" evidence="2">
    <location>
        <position position="132"/>
    </location>
    <ligand>
        <name>ATP</name>
        <dbReference type="ChEBI" id="CHEBI:30616"/>
    </ligand>
</feature>
<feature type="binding site" evidence="2">
    <location>
        <position position="295"/>
    </location>
    <ligand>
        <name>ATP</name>
        <dbReference type="ChEBI" id="CHEBI:30616"/>
    </ligand>
</feature>
<feature type="binding site" evidence="2">
    <location>
        <position position="298"/>
    </location>
    <ligand>
        <name>ATP</name>
        <dbReference type="ChEBI" id="CHEBI:30616"/>
    </ligand>
</feature>
<feature type="binding site" evidence="2">
    <location>
        <position position="299"/>
    </location>
    <ligand>
        <name>ATP</name>
        <dbReference type="ChEBI" id="CHEBI:30616"/>
    </ligand>
</feature>
<feature type="binding site" evidence="2">
    <location>
        <position position="321"/>
    </location>
    <ligand>
        <name>ATP</name>
        <dbReference type="ChEBI" id="CHEBI:30616"/>
    </ligand>
</feature>
<proteinExistence type="evidence at protein level"/>
<keyword id="KW-0067">ATP-binding</keyword>
<keyword id="KW-0436">Ligase</keyword>
<keyword id="KW-0547">Nucleotide-binding</keyword>
<keyword id="KW-0539">Nucleus</keyword>
<keyword id="KW-1185">Reference proteome</keyword>
<name>RTCA_DROME</name>
<reference key="1">
    <citation type="journal article" date="2000" name="Science">
        <title>The genome sequence of Drosophila melanogaster.</title>
        <authorList>
            <person name="Adams M.D."/>
            <person name="Celniker S.E."/>
            <person name="Holt R.A."/>
            <person name="Evans C.A."/>
            <person name="Gocayne J.D."/>
            <person name="Amanatides P.G."/>
            <person name="Scherer S.E."/>
            <person name="Li P.W."/>
            <person name="Hoskins R.A."/>
            <person name="Galle R.F."/>
            <person name="George R.A."/>
            <person name="Lewis S.E."/>
            <person name="Richards S."/>
            <person name="Ashburner M."/>
            <person name="Henderson S.N."/>
            <person name="Sutton G.G."/>
            <person name="Wortman J.R."/>
            <person name="Yandell M.D."/>
            <person name="Zhang Q."/>
            <person name="Chen L.X."/>
            <person name="Brandon R.C."/>
            <person name="Rogers Y.-H.C."/>
            <person name="Blazej R.G."/>
            <person name="Champe M."/>
            <person name="Pfeiffer B.D."/>
            <person name="Wan K.H."/>
            <person name="Doyle C."/>
            <person name="Baxter E.G."/>
            <person name="Helt G."/>
            <person name="Nelson C.R."/>
            <person name="Miklos G.L.G."/>
            <person name="Abril J.F."/>
            <person name="Agbayani A."/>
            <person name="An H.-J."/>
            <person name="Andrews-Pfannkoch C."/>
            <person name="Baldwin D."/>
            <person name="Ballew R.M."/>
            <person name="Basu A."/>
            <person name="Baxendale J."/>
            <person name="Bayraktaroglu L."/>
            <person name="Beasley E.M."/>
            <person name="Beeson K.Y."/>
            <person name="Benos P.V."/>
            <person name="Berman B.P."/>
            <person name="Bhandari D."/>
            <person name="Bolshakov S."/>
            <person name="Borkova D."/>
            <person name="Botchan M.R."/>
            <person name="Bouck J."/>
            <person name="Brokstein P."/>
            <person name="Brottier P."/>
            <person name="Burtis K.C."/>
            <person name="Busam D.A."/>
            <person name="Butler H."/>
            <person name="Cadieu E."/>
            <person name="Center A."/>
            <person name="Chandra I."/>
            <person name="Cherry J.M."/>
            <person name="Cawley S."/>
            <person name="Dahlke C."/>
            <person name="Davenport L.B."/>
            <person name="Davies P."/>
            <person name="de Pablos B."/>
            <person name="Delcher A."/>
            <person name="Deng Z."/>
            <person name="Mays A.D."/>
            <person name="Dew I."/>
            <person name="Dietz S.M."/>
            <person name="Dodson K."/>
            <person name="Doup L.E."/>
            <person name="Downes M."/>
            <person name="Dugan-Rocha S."/>
            <person name="Dunkov B.C."/>
            <person name="Dunn P."/>
            <person name="Durbin K.J."/>
            <person name="Evangelista C.C."/>
            <person name="Ferraz C."/>
            <person name="Ferriera S."/>
            <person name="Fleischmann W."/>
            <person name="Fosler C."/>
            <person name="Gabrielian A.E."/>
            <person name="Garg N.S."/>
            <person name="Gelbart W.M."/>
            <person name="Glasser K."/>
            <person name="Glodek A."/>
            <person name="Gong F."/>
            <person name="Gorrell J.H."/>
            <person name="Gu Z."/>
            <person name="Guan P."/>
            <person name="Harris M."/>
            <person name="Harris N.L."/>
            <person name="Harvey D.A."/>
            <person name="Heiman T.J."/>
            <person name="Hernandez J.R."/>
            <person name="Houck J."/>
            <person name="Hostin D."/>
            <person name="Houston K.A."/>
            <person name="Howland T.J."/>
            <person name="Wei M.-H."/>
            <person name="Ibegwam C."/>
            <person name="Jalali M."/>
            <person name="Kalush F."/>
            <person name="Karpen G.H."/>
            <person name="Ke Z."/>
            <person name="Kennison J.A."/>
            <person name="Ketchum K.A."/>
            <person name="Kimmel B.E."/>
            <person name="Kodira C.D."/>
            <person name="Kraft C.L."/>
            <person name="Kravitz S."/>
            <person name="Kulp D."/>
            <person name="Lai Z."/>
            <person name="Lasko P."/>
            <person name="Lei Y."/>
            <person name="Levitsky A.A."/>
            <person name="Li J.H."/>
            <person name="Li Z."/>
            <person name="Liang Y."/>
            <person name="Lin X."/>
            <person name="Liu X."/>
            <person name="Mattei B."/>
            <person name="McIntosh T.C."/>
            <person name="McLeod M.P."/>
            <person name="McPherson D."/>
            <person name="Merkulov G."/>
            <person name="Milshina N.V."/>
            <person name="Mobarry C."/>
            <person name="Morris J."/>
            <person name="Moshrefi A."/>
            <person name="Mount S.M."/>
            <person name="Moy M."/>
            <person name="Murphy B."/>
            <person name="Murphy L."/>
            <person name="Muzny D.M."/>
            <person name="Nelson D.L."/>
            <person name="Nelson D.R."/>
            <person name="Nelson K.A."/>
            <person name="Nixon K."/>
            <person name="Nusskern D.R."/>
            <person name="Pacleb J.M."/>
            <person name="Palazzolo M."/>
            <person name="Pittman G.S."/>
            <person name="Pan S."/>
            <person name="Pollard J."/>
            <person name="Puri V."/>
            <person name="Reese M.G."/>
            <person name="Reinert K."/>
            <person name="Remington K."/>
            <person name="Saunders R.D.C."/>
            <person name="Scheeler F."/>
            <person name="Shen H."/>
            <person name="Shue B.C."/>
            <person name="Siden-Kiamos I."/>
            <person name="Simpson M."/>
            <person name="Skupski M.P."/>
            <person name="Smith T.J."/>
            <person name="Spier E."/>
            <person name="Spradling A.C."/>
            <person name="Stapleton M."/>
            <person name="Strong R."/>
            <person name="Sun E."/>
            <person name="Svirskas R."/>
            <person name="Tector C."/>
            <person name="Turner R."/>
            <person name="Venter E."/>
            <person name="Wang A.H."/>
            <person name="Wang X."/>
            <person name="Wang Z.-Y."/>
            <person name="Wassarman D.A."/>
            <person name="Weinstock G.M."/>
            <person name="Weissenbach J."/>
            <person name="Williams S.M."/>
            <person name="Woodage T."/>
            <person name="Worley K.C."/>
            <person name="Wu D."/>
            <person name="Yang S."/>
            <person name="Yao Q.A."/>
            <person name="Ye J."/>
            <person name="Yeh R.-F."/>
            <person name="Zaveri J.S."/>
            <person name="Zhan M."/>
            <person name="Zhang G."/>
            <person name="Zhao Q."/>
            <person name="Zheng L."/>
            <person name="Zheng X.H."/>
            <person name="Zhong F.N."/>
            <person name="Zhong W."/>
            <person name="Zhou X."/>
            <person name="Zhu S.C."/>
            <person name="Zhu X."/>
            <person name="Smith H.O."/>
            <person name="Gibbs R.A."/>
            <person name="Myers E.W."/>
            <person name="Rubin G.M."/>
            <person name="Venter J.C."/>
        </authorList>
    </citation>
    <scope>NUCLEOTIDE SEQUENCE [LARGE SCALE GENOMIC DNA]</scope>
    <source>
        <strain>Berkeley</strain>
    </source>
</reference>
<reference key="2">
    <citation type="journal article" date="2002" name="Genome Biol.">
        <title>Annotation of the Drosophila melanogaster euchromatic genome: a systematic review.</title>
        <authorList>
            <person name="Misra S."/>
            <person name="Crosby M.A."/>
            <person name="Mungall C.J."/>
            <person name="Matthews B.B."/>
            <person name="Campbell K.S."/>
            <person name="Hradecky P."/>
            <person name="Huang Y."/>
            <person name="Kaminker J.S."/>
            <person name="Millburn G.H."/>
            <person name="Prochnik S.E."/>
            <person name="Smith C.D."/>
            <person name="Tupy J.L."/>
            <person name="Whitfield E.J."/>
            <person name="Bayraktaroglu L."/>
            <person name="Berman B.P."/>
            <person name="Bettencourt B.R."/>
            <person name="Celniker S.E."/>
            <person name="de Grey A.D.N.J."/>
            <person name="Drysdale R.A."/>
            <person name="Harris N.L."/>
            <person name="Richter J."/>
            <person name="Russo S."/>
            <person name="Schroeder A.J."/>
            <person name="Shu S.Q."/>
            <person name="Stapleton M."/>
            <person name="Yamada C."/>
            <person name="Ashburner M."/>
            <person name="Gelbart W.M."/>
            <person name="Rubin G.M."/>
            <person name="Lewis S.E."/>
        </authorList>
    </citation>
    <scope>GENOME REANNOTATION</scope>
    <source>
        <strain>Berkeley</strain>
    </source>
</reference>
<reference key="3">
    <citation type="journal article" date="2000" name="Science">
        <title>From sequence to chromosome: the tip of the X chromosome of D. melanogaster.</title>
        <authorList>
            <person name="Benos P.V."/>
            <person name="Gatt M.K."/>
            <person name="Ashburner M."/>
            <person name="Murphy L."/>
            <person name="Harris D."/>
            <person name="Barrell B.G."/>
            <person name="Ferraz C."/>
            <person name="Vidal S."/>
            <person name="Brun C."/>
            <person name="Demailles J."/>
            <person name="Cadieu E."/>
            <person name="Dreano S."/>
            <person name="Gloux S."/>
            <person name="Lelaure V."/>
            <person name="Mottier S."/>
            <person name="Galibert F."/>
            <person name="Borkova D."/>
            <person name="Minana B."/>
            <person name="Kafatos F.C."/>
            <person name="Louis C."/>
            <person name="Siden-Kiamos I."/>
            <person name="Bolshakov S."/>
            <person name="Papagiannakis G."/>
            <person name="Spanos L."/>
            <person name="Cox S."/>
            <person name="Madueno E."/>
            <person name="de Pablos B."/>
            <person name="Modolell J."/>
            <person name="Peter A."/>
            <person name="Schoettler P."/>
            <person name="Werner M."/>
            <person name="Mourkioti F."/>
            <person name="Beinert N."/>
            <person name="Dowe G."/>
            <person name="Schaefer U."/>
            <person name="Jaeckle H."/>
            <person name="Bucheton A."/>
            <person name="Callister D.M."/>
            <person name="Campbell L.A."/>
            <person name="Darlamitsou A."/>
            <person name="Henderson N.S."/>
            <person name="McMillan P.J."/>
            <person name="Salles C."/>
            <person name="Tait E.A."/>
            <person name="Valenti P."/>
            <person name="Saunders R.D.C."/>
            <person name="Glover D.M."/>
        </authorList>
    </citation>
    <scope>NUCLEOTIDE SEQUENCE [LARGE SCALE GENOMIC DNA]</scope>
    <source>
        <strain>Oregon-R</strain>
    </source>
</reference>
<reference key="4">
    <citation type="journal article" date="2002" name="Genome Biol.">
        <title>A Drosophila full-length cDNA resource.</title>
        <authorList>
            <person name="Stapleton M."/>
            <person name="Carlson J.W."/>
            <person name="Brokstein P."/>
            <person name="Yu C."/>
            <person name="Champe M."/>
            <person name="George R.A."/>
            <person name="Guarin H."/>
            <person name="Kronmiller B."/>
            <person name="Pacleb J.M."/>
            <person name="Park S."/>
            <person name="Wan K.H."/>
            <person name="Rubin G.M."/>
            <person name="Celniker S.E."/>
        </authorList>
    </citation>
    <scope>NUCLEOTIDE SEQUENCE [LARGE SCALE MRNA]</scope>
    <source>
        <strain>Berkeley</strain>
        <tissue>Embryo</tissue>
    </source>
</reference>
<reference key="5">
    <citation type="journal article" date="2015" name="Nat. Neurosci.">
        <title>Regulation of axon regeneration by the RNA repair and splicing pathway.</title>
        <authorList>
            <person name="Song Y."/>
            <person name="Sretavan D."/>
            <person name="Salegio E.A."/>
            <person name="Berg J."/>
            <person name="Huang X."/>
            <person name="Cheng T."/>
            <person name="Xiong X."/>
            <person name="Meltzer S."/>
            <person name="Han C."/>
            <person name="Nguyen T.T."/>
            <person name="Bresnahan J.C."/>
            <person name="Beattie M.S."/>
            <person name="Jan L.Y."/>
            <person name="Jan Y.N."/>
        </authorList>
    </citation>
    <scope>FUNCTION</scope>
    <scope>SUBCELLULAR LOCATION</scope>
    <scope>DEVELOPMENTAL STAGE</scope>
    <scope>DISRUPTION PHENOTYPE</scope>
</reference>
<reference key="6">
    <citation type="journal article" date="2020" name="Genes Dev.">
        <title>The microtubule regulator ringer functions downstream from the RNA repair/splicing pathway to promote axon regeneration.</title>
        <authorList>
            <person name="Vargas E.J.M."/>
            <person name="Matamoros A.J."/>
            <person name="Qiu J."/>
            <person name="Jan C.H."/>
            <person name="Wang Q."/>
            <person name="Gorczyca D."/>
            <person name="Han T.W."/>
            <person name="Weissman J.S."/>
            <person name="Jan Y.N."/>
            <person name="Banerjee S."/>
            <person name="Song Y."/>
        </authorList>
    </citation>
    <scope>FUNCTION</scope>
</reference>
<gene>
    <name evidence="5 7" type="primary">Rtca</name>
    <name evidence="7" type="ORF">CG4061</name>
</gene>
<accession>O77264</accession>
<organism>
    <name type="scientific">Drosophila melanogaster</name>
    <name type="common">Fruit fly</name>
    <dbReference type="NCBI Taxonomy" id="7227"/>
    <lineage>
        <taxon>Eukaryota</taxon>
        <taxon>Metazoa</taxon>
        <taxon>Ecdysozoa</taxon>
        <taxon>Arthropoda</taxon>
        <taxon>Hexapoda</taxon>
        <taxon>Insecta</taxon>
        <taxon>Pterygota</taxon>
        <taxon>Neoptera</taxon>
        <taxon>Endopterygota</taxon>
        <taxon>Diptera</taxon>
        <taxon>Brachycera</taxon>
        <taxon>Muscomorpha</taxon>
        <taxon>Ephydroidea</taxon>
        <taxon>Drosophilidae</taxon>
        <taxon>Drosophila</taxon>
        <taxon>Sophophora</taxon>
    </lineage>
</organism>
<sequence length="361" mass="39503">MDAEKMLEIDGSYLEGGGQALRNALSLSCILGKPVRVVKIRASRPSPGLSHQHLHGLNLLRDITNADVVGNYLLSSTVEFTPRTILDNTYRVETHTAASITLIYQMALPVLLFAGRPSRLIVSGGTNVDFAPPVEYMQEVLLPNLKHFGVSFDLKVQRYGFYPRGQGRCQLDVQPVTKLNSGKLVAFGRIKSVSGVAYCAGRLPVNIAIDMQQTAQREIHRLWPSQQCSIEPIKHSRQKAFHNGAGILMTVNTTSDVVLGASALGKKRIDGHVLGSEASCQLGDYMRKQVCVDDYMQDQLIIYMALAVGRSTMRTGKLTNHTRTAINVAEQMTGVKFDVAMEPGGQMLVSCKGLGHVNKLI</sequence>
<evidence type="ECO:0000250" key="1">
    <source>
        <dbReference type="UniProtKB" id="O00442"/>
    </source>
</evidence>
<evidence type="ECO:0000250" key="2">
    <source>
        <dbReference type="UniProtKB" id="P46849"/>
    </source>
</evidence>
<evidence type="ECO:0000269" key="3">
    <source>
    </source>
</evidence>
<evidence type="ECO:0000269" key="4">
    <source>
    </source>
</evidence>
<evidence type="ECO:0000303" key="5">
    <source>
    </source>
</evidence>
<evidence type="ECO:0000305" key="6"/>
<evidence type="ECO:0000312" key="7">
    <source>
        <dbReference type="FlyBase" id="FBgn0025630"/>
    </source>
</evidence>
<comment type="function">
    <text evidence="1 3 4">Catalyzes the conversion of 3'-phosphate to a 2',3'-cyclic phosphodiester at the end of RNA (By similarity). The mechanism of action of the enzyme occurs in 3 steps: (A) adenylation of the enzyme by ATP; (B) transfer of adenylate to an RNA-N3'P to produce RNA-N3'PP5'A; (C) and attack of the adjacent 2'-hydroxyl on the 3'-phosphorus in the diester linkage to produce the cyclic end product (By similarity). Likely functions in some aspects of cellular RNA processing (By similarity). Function plays an important role in a RNA repair and splicing pathway which controls axon regeneration in response to peripheral (PNS) and central nervous system (CNS) injury (PubMed:25961792, PubMed:31919191). In response to axotomy, negatively regulates splicing of Xbp1 which in turn activates downstream effectors which inhibit axon regeneration, including down-regulating the microtubule regulators ringer and futsch (PubMed:25961792, PubMed:31919191).</text>
</comment>
<comment type="catalytic activity">
    <reaction evidence="1">
        <text>a 3'-end 3'-phospho-ribonucleotide-RNA + ATP = a 3'-end 2',3'-cyclophospho-ribonucleotide-RNA + AMP + diphosphate</text>
        <dbReference type="Rhea" id="RHEA:23976"/>
        <dbReference type="Rhea" id="RHEA-COMP:10463"/>
        <dbReference type="Rhea" id="RHEA-COMP:10464"/>
        <dbReference type="ChEBI" id="CHEBI:30616"/>
        <dbReference type="ChEBI" id="CHEBI:33019"/>
        <dbReference type="ChEBI" id="CHEBI:83062"/>
        <dbReference type="ChEBI" id="CHEBI:83064"/>
        <dbReference type="ChEBI" id="CHEBI:456215"/>
        <dbReference type="EC" id="6.5.1.4"/>
    </reaction>
</comment>
<comment type="subcellular location">
    <subcellularLocation>
        <location evidence="1">Nucleus</location>
        <location evidence="1">Nucleoplasm</location>
    </subcellularLocation>
    <subcellularLocation>
        <location evidence="3">Nucleus</location>
    </subcellularLocation>
</comment>
<comment type="developmental stage">
    <text evidence="3">In larvae, detected in various types of multidendritic neurons including class IV and class III dendritic arborization (da) neurons (at protein level) (PubMed:25961792). In larvae, expressed in class IV da neurons, and tissues in the peripheral nervous system (PNS) and the ventral nerve cord (VNC) (PubMed:25961792).</text>
</comment>
<comment type="disruption phenotype">
    <text evidence="3">Severed axons of RNAi-mediated knockdown class III dendritic arborization (da) neurons, display increased regeneration.</text>
</comment>
<comment type="similarity">
    <text evidence="6">Belongs to the RNA 3'-terminal cyclase family. Type 1 subfamily.</text>
</comment>